<name>DNLI_METTP</name>
<organism>
    <name type="scientific">Methanothrix thermoacetophila (strain DSM 6194 / JCM 14653 / NBRC 101360 / PT)</name>
    <name type="common">Methanosaeta thermophila</name>
    <dbReference type="NCBI Taxonomy" id="349307"/>
    <lineage>
        <taxon>Archaea</taxon>
        <taxon>Methanobacteriati</taxon>
        <taxon>Methanobacteriota</taxon>
        <taxon>Stenosarchaea group</taxon>
        <taxon>Methanomicrobia</taxon>
        <taxon>Methanotrichales</taxon>
        <taxon>Methanotrichaceae</taxon>
        <taxon>Methanothrix</taxon>
    </lineage>
</organism>
<accession>A0B7F9</accession>
<feature type="chain" id="PRO_1000049873" description="DNA ligase">
    <location>
        <begin position="1"/>
        <end position="552"/>
    </location>
</feature>
<feature type="active site" description="N6-AMP-lysine intermediate" evidence="1">
    <location>
        <position position="246"/>
    </location>
</feature>
<feature type="binding site" evidence="1">
    <location>
        <position position="244"/>
    </location>
    <ligand>
        <name>ATP</name>
        <dbReference type="ChEBI" id="CHEBI:30616"/>
    </ligand>
</feature>
<feature type="binding site" evidence="1">
    <location>
        <position position="251"/>
    </location>
    <ligand>
        <name>ATP</name>
        <dbReference type="ChEBI" id="CHEBI:30616"/>
    </ligand>
</feature>
<feature type="binding site" evidence="1">
    <location>
        <position position="266"/>
    </location>
    <ligand>
        <name>ATP</name>
        <dbReference type="ChEBI" id="CHEBI:30616"/>
    </ligand>
</feature>
<feature type="binding site" evidence="1">
    <location>
        <position position="296"/>
    </location>
    <ligand>
        <name>ATP</name>
        <dbReference type="ChEBI" id="CHEBI:30616"/>
    </ligand>
</feature>
<feature type="binding site" evidence="1">
    <location>
        <position position="336"/>
    </location>
    <ligand>
        <name>ATP</name>
        <dbReference type="ChEBI" id="CHEBI:30616"/>
    </ligand>
</feature>
<feature type="binding site" evidence="1">
    <location>
        <position position="408"/>
    </location>
    <ligand>
        <name>ATP</name>
        <dbReference type="ChEBI" id="CHEBI:30616"/>
    </ligand>
</feature>
<feature type="binding site" evidence="1">
    <location>
        <position position="414"/>
    </location>
    <ligand>
        <name>ATP</name>
        <dbReference type="ChEBI" id="CHEBI:30616"/>
    </ligand>
</feature>
<evidence type="ECO:0000255" key="1">
    <source>
        <dbReference type="HAMAP-Rule" id="MF_00407"/>
    </source>
</evidence>
<dbReference type="EC" id="6.5.1.1" evidence="1"/>
<dbReference type="EMBL" id="CP000477">
    <property type="protein sequence ID" value="ABK14633.1"/>
    <property type="molecule type" value="Genomic_DNA"/>
</dbReference>
<dbReference type="RefSeq" id="WP_011696029.1">
    <property type="nucleotide sequence ID" value="NC_008553.1"/>
</dbReference>
<dbReference type="SMR" id="A0B7F9"/>
<dbReference type="STRING" id="349307.Mthe_0844"/>
<dbReference type="GeneID" id="4463057"/>
<dbReference type="KEGG" id="mtp:Mthe_0844"/>
<dbReference type="HOGENOM" id="CLU_005138_6_0_2"/>
<dbReference type="OrthoDB" id="31274at2157"/>
<dbReference type="Proteomes" id="UP000000674">
    <property type="component" value="Chromosome"/>
</dbReference>
<dbReference type="GO" id="GO:0005524">
    <property type="term" value="F:ATP binding"/>
    <property type="evidence" value="ECO:0007669"/>
    <property type="project" value="UniProtKB-UniRule"/>
</dbReference>
<dbReference type="GO" id="GO:0003677">
    <property type="term" value="F:DNA binding"/>
    <property type="evidence" value="ECO:0007669"/>
    <property type="project" value="InterPro"/>
</dbReference>
<dbReference type="GO" id="GO:0003910">
    <property type="term" value="F:DNA ligase (ATP) activity"/>
    <property type="evidence" value="ECO:0007669"/>
    <property type="project" value="UniProtKB-UniRule"/>
</dbReference>
<dbReference type="GO" id="GO:0046872">
    <property type="term" value="F:metal ion binding"/>
    <property type="evidence" value="ECO:0007669"/>
    <property type="project" value="UniProtKB-KW"/>
</dbReference>
<dbReference type="GO" id="GO:0051301">
    <property type="term" value="P:cell division"/>
    <property type="evidence" value="ECO:0007669"/>
    <property type="project" value="UniProtKB-KW"/>
</dbReference>
<dbReference type="GO" id="GO:0071897">
    <property type="term" value="P:DNA biosynthetic process"/>
    <property type="evidence" value="ECO:0007669"/>
    <property type="project" value="InterPro"/>
</dbReference>
<dbReference type="GO" id="GO:0006310">
    <property type="term" value="P:DNA recombination"/>
    <property type="evidence" value="ECO:0007669"/>
    <property type="project" value="UniProtKB-UniRule"/>
</dbReference>
<dbReference type="GO" id="GO:0006281">
    <property type="term" value="P:DNA repair"/>
    <property type="evidence" value="ECO:0007669"/>
    <property type="project" value="UniProtKB-UniRule"/>
</dbReference>
<dbReference type="GO" id="GO:0006273">
    <property type="term" value="P:lagging strand elongation"/>
    <property type="evidence" value="ECO:0007669"/>
    <property type="project" value="TreeGrafter"/>
</dbReference>
<dbReference type="CDD" id="cd07901">
    <property type="entry name" value="Adenylation_DNA_ligase_Arch_LigB"/>
    <property type="match status" value="1"/>
</dbReference>
<dbReference type="CDD" id="cd07972">
    <property type="entry name" value="OBF_DNA_ligase_Arch_LigB"/>
    <property type="match status" value="1"/>
</dbReference>
<dbReference type="FunFam" id="1.10.3260.10:FF:000007">
    <property type="entry name" value="DNA ligase"/>
    <property type="match status" value="1"/>
</dbReference>
<dbReference type="FunFam" id="2.40.50.140:FF:000163">
    <property type="entry name" value="Probable DNA ligase"/>
    <property type="match status" value="1"/>
</dbReference>
<dbReference type="FunFam" id="3.30.470.30:FF:000012">
    <property type="entry name" value="Probable DNA ligase"/>
    <property type="match status" value="1"/>
</dbReference>
<dbReference type="Gene3D" id="1.10.3260.10">
    <property type="entry name" value="DNA ligase, ATP-dependent, N-terminal domain"/>
    <property type="match status" value="1"/>
</dbReference>
<dbReference type="Gene3D" id="3.30.470.30">
    <property type="entry name" value="DNA ligase/mRNA capping enzyme"/>
    <property type="match status" value="1"/>
</dbReference>
<dbReference type="Gene3D" id="2.40.50.140">
    <property type="entry name" value="Nucleic acid-binding proteins"/>
    <property type="match status" value="1"/>
</dbReference>
<dbReference type="HAMAP" id="MF_00407">
    <property type="entry name" value="DNA_ligase"/>
    <property type="match status" value="1"/>
</dbReference>
<dbReference type="InterPro" id="IPR050191">
    <property type="entry name" value="ATP-dep_DNA_ligase"/>
</dbReference>
<dbReference type="InterPro" id="IPR022865">
    <property type="entry name" value="DNA_ligae_ATP-dep_bac/arc"/>
</dbReference>
<dbReference type="InterPro" id="IPR000977">
    <property type="entry name" value="DNA_ligase_ATP-dep"/>
</dbReference>
<dbReference type="InterPro" id="IPR012309">
    <property type="entry name" value="DNA_ligase_ATP-dep_C"/>
</dbReference>
<dbReference type="InterPro" id="IPR012310">
    <property type="entry name" value="DNA_ligase_ATP-dep_cent"/>
</dbReference>
<dbReference type="InterPro" id="IPR016059">
    <property type="entry name" value="DNA_ligase_ATP-dep_CS"/>
</dbReference>
<dbReference type="InterPro" id="IPR012308">
    <property type="entry name" value="DNA_ligase_ATP-dep_N"/>
</dbReference>
<dbReference type="InterPro" id="IPR036599">
    <property type="entry name" value="DNA_ligase_N_sf"/>
</dbReference>
<dbReference type="InterPro" id="IPR012340">
    <property type="entry name" value="NA-bd_OB-fold"/>
</dbReference>
<dbReference type="NCBIfam" id="TIGR00574">
    <property type="entry name" value="dnl1"/>
    <property type="match status" value="1"/>
</dbReference>
<dbReference type="PANTHER" id="PTHR45674:SF7">
    <property type="entry name" value="DNA LIGASE"/>
    <property type="match status" value="1"/>
</dbReference>
<dbReference type="PANTHER" id="PTHR45674">
    <property type="entry name" value="DNA LIGASE 1/3 FAMILY MEMBER"/>
    <property type="match status" value="1"/>
</dbReference>
<dbReference type="Pfam" id="PF04679">
    <property type="entry name" value="DNA_ligase_A_C"/>
    <property type="match status" value="1"/>
</dbReference>
<dbReference type="Pfam" id="PF01068">
    <property type="entry name" value="DNA_ligase_A_M"/>
    <property type="match status" value="1"/>
</dbReference>
<dbReference type="Pfam" id="PF04675">
    <property type="entry name" value="DNA_ligase_A_N"/>
    <property type="match status" value="1"/>
</dbReference>
<dbReference type="SUPFAM" id="SSF117018">
    <property type="entry name" value="ATP-dependent DNA ligase DNA-binding domain"/>
    <property type="match status" value="1"/>
</dbReference>
<dbReference type="SUPFAM" id="SSF56091">
    <property type="entry name" value="DNA ligase/mRNA capping enzyme, catalytic domain"/>
    <property type="match status" value="1"/>
</dbReference>
<dbReference type="SUPFAM" id="SSF50249">
    <property type="entry name" value="Nucleic acid-binding proteins"/>
    <property type="match status" value="1"/>
</dbReference>
<dbReference type="PROSITE" id="PS00697">
    <property type="entry name" value="DNA_LIGASE_A1"/>
    <property type="match status" value="1"/>
</dbReference>
<dbReference type="PROSITE" id="PS00333">
    <property type="entry name" value="DNA_LIGASE_A2"/>
    <property type="match status" value="1"/>
</dbReference>
<dbReference type="PROSITE" id="PS50160">
    <property type="entry name" value="DNA_LIGASE_A3"/>
    <property type="match status" value="1"/>
</dbReference>
<sequence length="552" mass="61188">MTGFARFAELCERISQTSGSLEKTDILASFLSDLESDDLRIVAGFVMGVVIPGTELGVGPSLLYESISRATGLSSDAVNELLRATGDPGLVAYRAVERRKPLTLAAFSGSEGLEVQDVYQRFLSIAKASGRGSQEIRVKNLQYMFSEASPLEAKYIARLAMEDMRIGVGEGLVRDAIAKAFGVSKEDVERAYNLTNDLGLVAEYAKLGRLNELGISINRPIKMMLAQIGESIEASLAEGATAVEWKFDGARVQIHKDKGNVRIFSRRLEDVTSSLPEIREIVRGHVRARTAILDGEAVATGEDGRPLPFQEILRRFRRKYGVARTAKTIPLKLHLFDIIYMDGASLLDEPLEERRRVLVSVADPEIIAEQVVTSDVHRVEEIYREALAAGHEGVMLKNPSSTYTPGKRGKNWLKIKPLLESLDLVVIGARWGEGKRANLLGSYRLACIDTDTGELKDVGWVATGITDEMLAELTELFRELIVKENGMEVEVHPEIVFEVGYEEIQRSPNYSSGYALRFPRLIAVRDDKSPSEADTLERIGEIYRLQRGRSKK</sequence>
<keyword id="KW-0067">ATP-binding</keyword>
<keyword id="KW-0131">Cell cycle</keyword>
<keyword id="KW-0132">Cell division</keyword>
<keyword id="KW-0227">DNA damage</keyword>
<keyword id="KW-0233">DNA recombination</keyword>
<keyword id="KW-0234">DNA repair</keyword>
<keyword id="KW-0235">DNA replication</keyword>
<keyword id="KW-0436">Ligase</keyword>
<keyword id="KW-0460">Magnesium</keyword>
<keyword id="KW-0479">Metal-binding</keyword>
<keyword id="KW-0547">Nucleotide-binding</keyword>
<keyword id="KW-1185">Reference proteome</keyword>
<protein>
    <recommendedName>
        <fullName evidence="1">DNA ligase</fullName>
        <ecNumber evidence="1">6.5.1.1</ecNumber>
    </recommendedName>
    <alternativeName>
        <fullName evidence="1">Polydeoxyribonucleotide synthase [ATP]</fullName>
    </alternativeName>
</protein>
<reference key="1">
    <citation type="submission" date="2006-10" db="EMBL/GenBank/DDBJ databases">
        <title>Complete sequence of Methanosaeta thermophila PT.</title>
        <authorList>
            <consortium name="US DOE Joint Genome Institute"/>
            <person name="Copeland A."/>
            <person name="Lucas S."/>
            <person name="Lapidus A."/>
            <person name="Barry K."/>
            <person name="Detter J.C."/>
            <person name="Glavina del Rio T."/>
            <person name="Hammon N."/>
            <person name="Israni S."/>
            <person name="Pitluck S."/>
            <person name="Chain P."/>
            <person name="Malfatti S."/>
            <person name="Shin M."/>
            <person name="Vergez L."/>
            <person name="Schmutz J."/>
            <person name="Larimer F."/>
            <person name="Land M."/>
            <person name="Hauser L."/>
            <person name="Kyrpides N."/>
            <person name="Kim E."/>
            <person name="Smith K.S."/>
            <person name="Ingram-Smith C."/>
            <person name="Richardson P."/>
        </authorList>
    </citation>
    <scope>NUCLEOTIDE SEQUENCE [LARGE SCALE GENOMIC DNA]</scope>
    <source>
        <strain>DSM 6194 / JCM 14653 / NBRC 101360 / PT</strain>
    </source>
</reference>
<gene>
    <name evidence="1" type="primary">lig</name>
    <name type="ordered locus">Mthe_0844</name>
</gene>
<proteinExistence type="inferred from homology"/>
<comment type="function">
    <text evidence="1">DNA ligase that seals nicks in double-stranded DNA during DNA replication, DNA recombination and DNA repair.</text>
</comment>
<comment type="catalytic activity">
    <reaction evidence="1">
        <text>ATP + (deoxyribonucleotide)n-3'-hydroxyl + 5'-phospho-(deoxyribonucleotide)m = (deoxyribonucleotide)n+m + AMP + diphosphate.</text>
        <dbReference type="EC" id="6.5.1.1"/>
    </reaction>
</comment>
<comment type="cofactor">
    <cofactor evidence="1">
        <name>Mg(2+)</name>
        <dbReference type="ChEBI" id="CHEBI:18420"/>
    </cofactor>
</comment>
<comment type="similarity">
    <text evidence="1">Belongs to the ATP-dependent DNA ligase family.</text>
</comment>